<organism>
    <name type="scientific">Shouchella clausii (strain KSM-K16)</name>
    <name type="common">Alkalihalobacillus clausii</name>
    <dbReference type="NCBI Taxonomy" id="66692"/>
    <lineage>
        <taxon>Bacteria</taxon>
        <taxon>Bacillati</taxon>
        <taxon>Bacillota</taxon>
        <taxon>Bacilli</taxon>
        <taxon>Bacillales</taxon>
        <taxon>Bacillaceae</taxon>
        <taxon>Shouchella</taxon>
    </lineage>
</organism>
<name>SYC_SHOC1</name>
<keyword id="KW-0030">Aminoacyl-tRNA synthetase</keyword>
<keyword id="KW-0067">ATP-binding</keyword>
<keyword id="KW-0963">Cytoplasm</keyword>
<keyword id="KW-0436">Ligase</keyword>
<keyword id="KW-0479">Metal-binding</keyword>
<keyword id="KW-0547">Nucleotide-binding</keyword>
<keyword id="KW-0597">Phosphoprotein</keyword>
<keyword id="KW-0648">Protein biosynthesis</keyword>
<keyword id="KW-1185">Reference proteome</keyword>
<keyword id="KW-0862">Zinc</keyword>
<sequence>MIKLFNSLTNKKEPFVPIEEGKVKMYCCGPTVYNYIHIGNARPPIVYDMVRRYLTYRGYDVTFVSNFTDVDDKIIRAANELGEEVAAVAERFIKAYYADTCALNVKEADLHPRVTETMDDIIAFIADLEKKGFAYEAGGDVYFRTRKFNGYGKLSGQALDDLQSGARIEVDERKEDPLDFVLWKAAKPNEISWSSPWGEGRPGWHIECSAMIKKSLGDTIDIHAGGKDLTFPHHENEIAQSEALTGKKLANYWMHNGFVNINNEKMSKSLGNFVLAHDIIQQYSPEVVRFFMLTAHYRTPINFSDELLKGAEAGLERLKNTVANLQHRLAETADMGAEEEWLEKIAGAKQRFIEEMDDDFNSANAISVLFDLAKEANIYMSEAQTSKKVLNAFLELFAEFGEVLGVSFTQQEEELLDAEIEALIEERNVARKERNFARADEIRDLLKEKNIVLEDTPQGVRWKRGS</sequence>
<gene>
    <name evidence="1" type="primary">cysS</name>
    <name type="ordered locus">ABC0129</name>
</gene>
<proteinExistence type="inferred from homology"/>
<feature type="chain" id="PRO_0000159351" description="Cysteine--tRNA ligase">
    <location>
        <begin position="1"/>
        <end position="466"/>
    </location>
</feature>
<feature type="short sequence motif" description="'HIGH' region">
    <location>
        <begin position="30"/>
        <end position="40"/>
    </location>
</feature>
<feature type="short sequence motif" description="'KMSKS' region">
    <location>
        <begin position="265"/>
        <end position="269"/>
    </location>
</feature>
<feature type="binding site" evidence="1">
    <location>
        <position position="28"/>
    </location>
    <ligand>
        <name>Zn(2+)</name>
        <dbReference type="ChEBI" id="CHEBI:29105"/>
    </ligand>
</feature>
<feature type="binding site" evidence="1">
    <location>
        <position position="208"/>
    </location>
    <ligand>
        <name>Zn(2+)</name>
        <dbReference type="ChEBI" id="CHEBI:29105"/>
    </ligand>
</feature>
<feature type="binding site" evidence="1">
    <location>
        <position position="233"/>
    </location>
    <ligand>
        <name>Zn(2+)</name>
        <dbReference type="ChEBI" id="CHEBI:29105"/>
    </ligand>
</feature>
<feature type="binding site" evidence="1">
    <location>
        <position position="237"/>
    </location>
    <ligand>
        <name>Zn(2+)</name>
        <dbReference type="ChEBI" id="CHEBI:29105"/>
    </ligand>
</feature>
<feature type="binding site" evidence="1">
    <location>
        <position position="268"/>
    </location>
    <ligand>
        <name>ATP</name>
        <dbReference type="ChEBI" id="CHEBI:30616"/>
    </ligand>
</feature>
<feature type="modified residue" description="Phosphoserine" evidence="1">
    <location>
        <position position="269"/>
    </location>
</feature>
<protein>
    <recommendedName>
        <fullName evidence="1">Cysteine--tRNA ligase</fullName>
        <ecNumber evidence="1">6.1.1.16</ecNumber>
    </recommendedName>
    <alternativeName>
        <fullName evidence="1">Cysteinyl-tRNA synthetase</fullName>
        <shortName evidence="1">CysRS</shortName>
    </alternativeName>
</protein>
<accession>Q5WLT3</accession>
<dbReference type="EC" id="6.1.1.16" evidence="1"/>
<dbReference type="EMBL" id="AP006627">
    <property type="protein sequence ID" value="BAD62672.1"/>
    <property type="molecule type" value="Genomic_DNA"/>
</dbReference>
<dbReference type="RefSeq" id="WP_011244993.1">
    <property type="nucleotide sequence ID" value="NC_006582.1"/>
</dbReference>
<dbReference type="SMR" id="Q5WLT3"/>
<dbReference type="STRING" id="66692.ABC0129"/>
<dbReference type="KEGG" id="bcl:ABC0129"/>
<dbReference type="eggNOG" id="COG0215">
    <property type="taxonomic scope" value="Bacteria"/>
</dbReference>
<dbReference type="HOGENOM" id="CLU_013528_0_1_9"/>
<dbReference type="OrthoDB" id="9815130at2"/>
<dbReference type="Proteomes" id="UP000001168">
    <property type="component" value="Chromosome"/>
</dbReference>
<dbReference type="GO" id="GO:0005829">
    <property type="term" value="C:cytosol"/>
    <property type="evidence" value="ECO:0007669"/>
    <property type="project" value="TreeGrafter"/>
</dbReference>
<dbReference type="GO" id="GO:0005524">
    <property type="term" value="F:ATP binding"/>
    <property type="evidence" value="ECO:0007669"/>
    <property type="project" value="UniProtKB-UniRule"/>
</dbReference>
<dbReference type="GO" id="GO:0004817">
    <property type="term" value="F:cysteine-tRNA ligase activity"/>
    <property type="evidence" value="ECO:0007669"/>
    <property type="project" value="UniProtKB-UniRule"/>
</dbReference>
<dbReference type="GO" id="GO:0008270">
    <property type="term" value="F:zinc ion binding"/>
    <property type="evidence" value="ECO:0007669"/>
    <property type="project" value="UniProtKB-UniRule"/>
</dbReference>
<dbReference type="GO" id="GO:0006423">
    <property type="term" value="P:cysteinyl-tRNA aminoacylation"/>
    <property type="evidence" value="ECO:0007669"/>
    <property type="project" value="UniProtKB-UniRule"/>
</dbReference>
<dbReference type="CDD" id="cd00672">
    <property type="entry name" value="CysRS_core"/>
    <property type="match status" value="1"/>
</dbReference>
<dbReference type="FunFam" id="3.40.50.620:FF:000009">
    <property type="entry name" value="Cysteine--tRNA ligase"/>
    <property type="match status" value="1"/>
</dbReference>
<dbReference type="Gene3D" id="1.20.120.1910">
    <property type="entry name" value="Cysteine-tRNA ligase, C-terminal anti-codon recognition domain"/>
    <property type="match status" value="1"/>
</dbReference>
<dbReference type="Gene3D" id="3.40.50.620">
    <property type="entry name" value="HUPs"/>
    <property type="match status" value="1"/>
</dbReference>
<dbReference type="HAMAP" id="MF_00041">
    <property type="entry name" value="Cys_tRNA_synth"/>
    <property type="match status" value="1"/>
</dbReference>
<dbReference type="InterPro" id="IPR015803">
    <property type="entry name" value="Cys-tRNA-ligase"/>
</dbReference>
<dbReference type="InterPro" id="IPR015273">
    <property type="entry name" value="Cys-tRNA-synt_Ia_DALR"/>
</dbReference>
<dbReference type="InterPro" id="IPR024909">
    <property type="entry name" value="Cys-tRNA/MSH_ligase"/>
</dbReference>
<dbReference type="InterPro" id="IPR056411">
    <property type="entry name" value="CysS_C"/>
</dbReference>
<dbReference type="InterPro" id="IPR014729">
    <property type="entry name" value="Rossmann-like_a/b/a_fold"/>
</dbReference>
<dbReference type="InterPro" id="IPR032678">
    <property type="entry name" value="tRNA-synt_1_cat_dom"/>
</dbReference>
<dbReference type="InterPro" id="IPR009080">
    <property type="entry name" value="tRNAsynth_Ia_anticodon-bd"/>
</dbReference>
<dbReference type="NCBIfam" id="TIGR00435">
    <property type="entry name" value="cysS"/>
    <property type="match status" value="1"/>
</dbReference>
<dbReference type="PANTHER" id="PTHR10890:SF3">
    <property type="entry name" value="CYSTEINE--TRNA LIGASE, CYTOPLASMIC"/>
    <property type="match status" value="1"/>
</dbReference>
<dbReference type="PANTHER" id="PTHR10890">
    <property type="entry name" value="CYSTEINYL-TRNA SYNTHETASE"/>
    <property type="match status" value="1"/>
</dbReference>
<dbReference type="Pfam" id="PF23493">
    <property type="entry name" value="CysS_C"/>
    <property type="match status" value="1"/>
</dbReference>
<dbReference type="Pfam" id="PF09190">
    <property type="entry name" value="DALR_2"/>
    <property type="match status" value="1"/>
</dbReference>
<dbReference type="Pfam" id="PF01406">
    <property type="entry name" value="tRNA-synt_1e"/>
    <property type="match status" value="1"/>
</dbReference>
<dbReference type="PRINTS" id="PR00983">
    <property type="entry name" value="TRNASYNTHCYS"/>
</dbReference>
<dbReference type="SMART" id="SM00840">
    <property type="entry name" value="DALR_2"/>
    <property type="match status" value="1"/>
</dbReference>
<dbReference type="SUPFAM" id="SSF47323">
    <property type="entry name" value="Anticodon-binding domain of a subclass of class I aminoacyl-tRNA synthetases"/>
    <property type="match status" value="1"/>
</dbReference>
<dbReference type="SUPFAM" id="SSF52374">
    <property type="entry name" value="Nucleotidylyl transferase"/>
    <property type="match status" value="1"/>
</dbReference>
<comment type="catalytic activity">
    <reaction evidence="1">
        <text>tRNA(Cys) + L-cysteine + ATP = L-cysteinyl-tRNA(Cys) + AMP + diphosphate</text>
        <dbReference type="Rhea" id="RHEA:17773"/>
        <dbReference type="Rhea" id="RHEA-COMP:9661"/>
        <dbReference type="Rhea" id="RHEA-COMP:9679"/>
        <dbReference type="ChEBI" id="CHEBI:30616"/>
        <dbReference type="ChEBI" id="CHEBI:33019"/>
        <dbReference type="ChEBI" id="CHEBI:35235"/>
        <dbReference type="ChEBI" id="CHEBI:78442"/>
        <dbReference type="ChEBI" id="CHEBI:78517"/>
        <dbReference type="ChEBI" id="CHEBI:456215"/>
        <dbReference type="EC" id="6.1.1.16"/>
    </reaction>
</comment>
<comment type="cofactor">
    <cofactor evidence="1">
        <name>Zn(2+)</name>
        <dbReference type="ChEBI" id="CHEBI:29105"/>
    </cofactor>
    <text evidence="1">Binds 1 zinc ion per subunit.</text>
</comment>
<comment type="subunit">
    <text evidence="1">Monomer.</text>
</comment>
<comment type="subcellular location">
    <subcellularLocation>
        <location evidence="1">Cytoplasm</location>
    </subcellularLocation>
</comment>
<comment type="similarity">
    <text evidence="1">Belongs to the class-I aminoacyl-tRNA synthetase family.</text>
</comment>
<evidence type="ECO:0000255" key="1">
    <source>
        <dbReference type="HAMAP-Rule" id="MF_00041"/>
    </source>
</evidence>
<reference key="1">
    <citation type="submission" date="2003-10" db="EMBL/GenBank/DDBJ databases">
        <title>The complete genome sequence of the alkaliphilic Bacillus clausii KSM-K16.</title>
        <authorList>
            <person name="Takaki Y."/>
            <person name="Kageyama Y."/>
            <person name="Shimamura S."/>
            <person name="Suzuki H."/>
            <person name="Nishi S."/>
            <person name="Hatada Y."/>
            <person name="Kawai S."/>
            <person name="Ito S."/>
            <person name="Horikoshi K."/>
        </authorList>
    </citation>
    <scope>NUCLEOTIDE SEQUENCE [LARGE SCALE GENOMIC DNA]</scope>
    <source>
        <strain>KSM-K16</strain>
    </source>
</reference>